<proteinExistence type="inferred from homology"/>
<feature type="chain" id="PRO_0000368937" description="ATP synthase subunit b, chloroplastic">
    <location>
        <begin position="1"/>
        <end position="184"/>
    </location>
</feature>
<feature type="transmembrane region" description="Helical" evidence="1">
    <location>
        <begin position="27"/>
        <end position="49"/>
    </location>
</feature>
<evidence type="ECO:0000255" key="1">
    <source>
        <dbReference type="HAMAP-Rule" id="MF_01398"/>
    </source>
</evidence>
<organism>
    <name type="scientific">Guizotia abyssinica</name>
    <name type="common">Niger</name>
    <name type="synonym">Ramtilla</name>
    <dbReference type="NCBI Taxonomy" id="4230"/>
    <lineage>
        <taxon>Eukaryota</taxon>
        <taxon>Viridiplantae</taxon>
        <taxon>Streptophyta</taxon>
        <taxon>Embryophyta</taxon>
        <taxon>Tracheophyta</taxon>
        <taxon>Spermatophyta</taxon>
        <taxon>Magnoliopsida</taxon>
        <taxon>eudicotyledons</taxon>
        <taxon>Gunneridae</taxon>
        <taxon>Pentapetalae</taxon>
        <taxon>asterids</taxon>
        <taxon>campanulids</taxon>
        <taxon>Asterales</taxon>
        <taxon>Asteraceae</taxon>
        <taxon>Asteroideae</taxon>
        <taxon>Heliantheae alliance</taxon>
        <taxon>Millerieae</taxon>
        <taxon>Guizotia</taxon>
    </lineage>
</organism>
<keyword id="KW-0066">ATP synthesis</keyword>
<keyword id="KW-0138">CF(0)</keyword>
<keyword id="KW-0150">Chloroplast</keyword>
<keyword id="KW-0375">Hydrogen ion transport</keyword>
<keyword id="KW-0406">Ion transport</keyword>
<keyword id="KW-0472">Membrane</keyword>
<keyword id="KW-0934">Plastid</keyword>
<keyword id="KW-0793">Thylakoid</keyword>
<keyword id="KW-0812">Transmembrane</keyword>
<keyword id="KW-1133">Transmembrane helix</keyword>
<keyword id="KW-0813">Transport</keyword>
<gene>
    <name evidence="1" type="primary">atpF</name>
    <name type="ordered locus">GuabCp014</name>
</gene>
<name>ATPF_GUIAB</name>
<sequence length="184" mass="20813">MKNVTDSFVSLGHWPSAGSFGFNTDILATNLINLSVVLGVLIFFGKGVLSDLLDNRKQRILNTIRNSEELREGAIEQLEKARARLRKVEIEADEFRVNGYSEIEREKLNLIDSTYKTLEQLENYKNETINFEQQKASNQVRQRVFQQALQGALGTLNSCLNNELHLRTISANIGILAAMKQITD</sequence>
<geneLocation type="chloroplast"/>
<dbReference type="EMBL" id="EU549769">
    <property type="protein sequence ID" value="ACB86520.1"/>
    <property type="molecule type" value="Genomic_DNA"/>
</dbReference>
<dbReference type="RefSeq" id="YP_001837353.1">
    <property type="nucleotide sequence ID" value="NC_010601.1"/>
</dbReference>
<dbReference type="SMR" id="B2LMI6"/>
<dbReference type="GeneID" id="6219181"/>
<dbReference type="GO" id="GO:0009535">
    <property type="term" value="C:chloroplast thylakoid membrane"/>
    <property type="evidence" value="ECO:0007669"/>
    <property type="project" value="UniProtKB-SubCell"/>
</dbReference>
<dbReference type="GO" id="GO:0045259">
    <property type="term" value="C:proton-transporting ATP synthase complex"/>
    <property type="evidence" value="ECO:0007669"/>
    <property type="project" value="UniProtKB-KW"/>
</dbReference>
<dbReference type="GO" id="GO:0046933">
    <property type="term" value="F:proton-transporting ATP synthase activity, rotational mechanism"/>
    <property type="evidence" value="ECO:0007669"/>
    <property type="project" value="UniProtKB-UniRule"/>
</dbReference>
<dbReference type="CDD" id="cd06503">
    <property type="entry name" value="ATP-synt_Fo_b"/>
    <property type="match status" value="1"/>
</dbReference>
<dbReference type="HAMAP" id="MF_01398">
    <property type="entry name" value="ATP_synth_b_bprime"/>
    <property type="match status" value="1"/>
</dbReference>
<dbReference type="InterPro" id="IPR002146">
    <property type="entry name" value="ATP_synth_b/b'su_bac/chlpt"/>
</dbReference>
<dbReference type="PANTHER" id="PTHR34264">
    <property type="entry name" value="ATP SYNTHASE SUBUNIT B, CHLOROPLASTIC"/>
    <property type="match status" value="1"/>
</dbReference>
<dbReference type="PANTHER" id="PTHR34264:SF3">
    <property type="entry name" value="ATP SYNTHASE SUBUNIT B, CHLOROPLASTIC"/>
    <property type="match status" value="1"/>
</dbReference>
<dbReference type="Pfam" id="PF00430">
    <property type="entry name" value="ATP-synt_B"/>
    <property type="match status" value="1"/>
</dbReference>
<reference key="1">
    <citation type="submission" date="2008-03" db="EMBL/GenBank/DDBJ databases">
        <title>Guizotia abyssinica chloroplast sequenced using Solexa.</title>
        <authorList>
            <person name="Kane N.C."/>
            <person name="Dempewolf H."/>
            <person name="Stewart M.L."/>
            <person name="Cronk Q."/>
            <person name="Rieseberrg L.H."/>
        </authorList>
    </citation>
    <scope>NUCLEOTIDE SEQUENCE [LARGE SCALE GENOMIC DNA]</scope>
    <source>
        <strain>cv. PI 508077</strain>
    </source>
</reference>
<protein>
    <recommendedName>
        <fullName evidence="1">ATP synthase subunit b, chloroplastic</fullName>
    </recommendedName>
    <alternativeName>
        <fullName evidence="1">ATP synthase F(0) sector subunit b</fullName>
    </alternativeName>
    <alternativeName>
        <fullName evidence="1">ATPase subunit I</fullName>
    </alternativeName>
</protein>
<accession>B2LMI6</accession>
<comment type="function">
    <text evidence="1">F(1)F(0) ATP synthase produces ATP from ADP in the presence of a proton or sodium gradient. F-type ATPases consist of two structural domains, F(1) containing the extramembraneous catalytic core and F(0) containing the membrane proton channel, linked together by a central stalk and a peripheral stalk. During catalysis, ATP synthesis in the catalytic domain of F(1) is coupled via a rotary mechanism of the central stalk subunits to proton translocation.</text>
</comment>
<comment type="function">
    <text evidence="1">Component of the F(0) channel, it forms part of the peripheral stalk, linking F(1) to F(0).</text>
</comment>
<comment type="subunit">
    <text evidence="1">F-type ATPases have 2 components, F(1) - the catalytic core - and F(0) - the membrane proton channel. F(1) has five subunits: alpha(3), beta(3), gamma(1), delta(1), epsilon(1). F(0) has four main subunits: a(1), b(1), b'(1) and c(10-14). The alpha and beta chains form an alternating ring which encloses part of the gamma chain. F(1) is attached to F(0) by a central stalk formed by the gamma and epsilon chains, while a peripheral stalk is formed by the delta, b and b' chains.</text>
</comment>
<comment type="subcellular location">
    <subcellularLocation>
        <location evidence="1">Plastid</location>
        <location evidence="1">Chloroplast thylakoid membrane</location>
        <topology evidence="1">Single-pass membrane protein</topology>
    </subcellularLocation>
</comment>
<comment type="miscellaneous">
    <text>In plastids the F-type ATPase is also known as CF(1)CF(0).</text>
</comment>
<comment type="similarity">
    <text evidence="1">Belongs to the ATPase B chain family.</text>
</comment>